<name>METK_BACFR</name>
<protein>
    <recommendedName>
        <fullName evidence="1">S-adenosylmethionine synthase</fullName>
        <shortName evidence="1">AdoMet synthase</shortName>
        <ecNumber evidence="1">2.5.1.6</ecNumber>
    </recommendedName>
    <alternativeName>
        <fullName evidence="1">MAT</fullName>
    </alternativeName>
    <alternativeName>
        <fullName evidence="1">Methionine adenosyltransferase</fullName>
    </alternativeName>
</protein>
<organism>
    <name type="scientific">Bacteroides fragilis (strain YCH46)</name>
    <dbReference type="NCBI Taxonomy" id="295405"/>
    <lineage>
        <taxon>Bacteria</taxon>
        <taxon>Pseudomonadati</taxon>
        <taxon>Bacteroidota</taxon>
        <taxon>Bacteroidia</taxon>
        <taxon>Bacteroidales</taxon>
        <taxon>Bacteroidaceae</taxon>
        <taxon>Bacteroides</taxon>
    </lineage>
</organism>
<sequence length="430" mass="47355">MGYLFTSESVSEGHPDKVADQISDAVLDKLLAYDPSSKVACETLVTTGQVVLAGEVKTGAYVDLQLIAREVIQKIGYTKGEYMFESNSCGVLSAIHEQSADINRGVEREDPMNQGAGDQGMMFGYATNETENYMPLSLDLAHRILLVLADIRREGKEMTYLRPDAKSQVTIEYDDNGTPVRIDTIVVSTQHDEFILPADNSAAAQLKADEEMLAVIRKDVIEVLMPRVIASINHPKVLALFNDHIIYHVNPTGKFVIGGPHGDTGLTGRKIIVDTYGGKGAHGGGAFSGKDPSKVDRSAAYAARHIAKNLVAAGVADEMLVQVSYAIGVARPINIYVNTYGRSNVKMSDGEIARKIDELFDLRPKAIEDRLKLRYPIYSETAAYGHMGREPQMVTKHFQSRYEGDRTMEVELFTWEKLDYVDKVKAAFGL</sequence>
<reference key="1">
    <citation type="journal article" date="2004" name="Proc. Natl. Acad. Sci. U.S.A.">
        <title>Genomic analysis of Bacteroides fragilis reveals extensive DNA inversions regulating cell surface adaptation.</title>
        <authorList>
            <person name="Kuwahara T."/>
            <person name="Yamashita A."/>
            <person name="Hirakawa H."/>
            <person name="Nakayama H."/>
            <person name="Toh H."/>
            <person name="Okada N."/>
            <person name="Kuhara S."/>
            <person name="Hattori M."/>
            <person name="Hayashi T."/>
            <person name="Ohnishi Y."/>
        </authorList>
    </citation>
    <scope>NUCLEOTIDE SEQUENCE [LARGE SCALE GENOMIC DNA]</scope>
    <source>
        <strain>YCH46</strain>
    </source>
</reference>
<evidence type="ECO:0000255" key="1">
    <source>
        <dbReference type="HAMAP-Rule" id="MF_00086"/>
    </source>
</evidence>
<comment type="function">
    <text evidence="1">Catalyzes the formation of S-adenosylmethionine (AdoMet) from methionine and ATP. The overall synthetic reaction is composed of two sequential steps, AdoMet formation and the subsequent tripolyphosphate hydrolysis which occurs prior to release of AdoMet from the enzyme.</text>
</comment>
<comment type="catalytic activity">
    <reaction evidence="1">
        <text>L-methionine + ATP + H2O = S-adenosyl-L-methionine + phosphate + diphosphate</text>
        <dbReference type="Rhea" id="RHEA:21080"/>
        <dbReference type="ChEBI" id="CHEBI:15377"/>
        <dbReference type="ChEBI" id="CHEBI:30616"/>
        <dbReference type="ChEBI" id="CHEBI:33019"/>
        <dbReference type="ChEBI" id="CHEBI:43474"/>
        <dbReference type="ChEBI" id="CHEBI:57844"/>
        <dbReference type="ChEBI" id="CHEBI:59789"/>
        <dbReference type="EC" id="2.5.1.6"/>
    </reaction>
</comment>
<comment type="cofactor">
    <cofactor evidence="1">
        <name>Mg(2+)</name>
        <dbReference type="ChEBI" id="CHEBI:18420"/>
    </cofactor>
    <text evidence="1">Binds 2 divalent ions per subunit.</text>
</comment>
<comment type="cofactor">
    <cofactor evidence="1">
        <name>K(+)</name>
        <dbReference type="ChEBI" id="CHEBI:29103"/>
    </cofactor>
    <text evidence="1">Binds 1 potassium ion per subunit.</text>
</comment>
<comment type="pathway">
    <text evidence="1">Amino-acid biosynthesis; S-adenosyl-L-methionine biosynthesis; S-adenosyl-L-methionine from L-methionine: step 1/1.</text>
</comment>
<comment type="subunit">
    <text evidence="1">Homotetramer; dimer of dimers.</text>
</comment>
<comment type="subcellular location">
    <subcellularLocation>
        <location evidence="1">Cytoplasm</location>
    </subcellularLocation>
</comment>
<comment type="similarity">
    <text evidence="1">Belongs to the AdoMet synthase family.</text>
</comment>
<keyword id="KW-0067">ATP-binding</keyword>
<keyword id="KW-0963">Cytoplasm</keyword>
<keyword id="KW-0460">Magnesium</keyword>
<keyword id="KW-0479">Metal-binding</keyword>
<keyword id="KW-0547">Nucleotide-binding</keyword>
<keyword id="KW-0554">One-carbon metabolism</keyword>
<keyword id="KW-0630">Potassium</keyword>
<keyword id="KW-0808">Transferase</keyword>
<feature type="chain" id="PRO_0000174487" description="S-adenosylmethionine synthase">
    <location>
        <begin position="1"/>
        <end position="430"/>
    </location>
</feature>
<feature type="region of interest" description="Flexible loop" evidence="1">
    <location>
        <begin position="98"/>
        <end position="108"/>
    </location>
</feature>
<feature type="binding site" description="in other chain" evidence="1">
    <location>
        <position position="14"/>
    </location>
    <ligand>
        <name>ATP</name>
        <dbReference type="ChEBI" id="CHEBI:30616"/>
        <note>ligand shared between two neighboring subunits</note>
    </ligand>
</feature>
<feature type="binding site" evidence="1">
    <location>
        <position position="16"/>
    </location>
    <ligand>
        <name>Mg(2+)</name>
        <dbReference type="ChEBI" id="CHEBI:18420"/>
    </ligand>
</feature>
<feature type="binding site" evidence="1">
    <location>
        <position position="42"/>
    </location>
    <ligand>
        <name>K(+)</name>
        <dbReference type="ChEBI" id="CHEBI:29103"/>
    </ligand>
</feature>
<feature type="binding site" description="in other chain" evidence="1">
    <location>
        <position position="55"/>
    </location>
    <ligand>
        <name>L-methionine</name>
        <dbReference type="ChEBI" id="CHEBI:57844"/>
        <note>ligand shared between two neighboring subunits</note>
    </ligand>
</feature>
<feature type="binding site" description="in other chain" evidence="1">
    <location>
        <position position="98"/>
    </location>
    <ligand>
        <name>L-methionine</name>
        <dbReference type="ChEBI" id="CHEBI:57844"/>
        <note>ligand shared between two neighboring subunits</note>
    </ligand>
</feature>
<feature type="binding site" description="in other chain" evidence="1">
    <location>
        <begin position="164"/>
        <end position="166"/>
    </location>
    <ligand>
        <name>ATP</name>
        <dbReference type="ChEBI" id="CHEBI:30616"/>
        <note>ligand shared between two neighboring subunits</note>
    </ligand>
</feature>
<feature type="binding site" description="in other chain" evidence="1">
    <location>
        <begin position="254"/>
        <end position="255"/>
    </location>
    <ligand>
        <name>ATP</name>
        <dbReference type="ChEBI" id="CHEBI:30616"/>
        <note>ligand shared between two neighboring subunits</note>
    </ligand>
</feature>
<feature type="binding site" evidence="1">
    <location>
        <position position="263"/>
    </location>
    <ligand>
        <name>ATP</name>
        <dbReference type="ChEBI" id="CHEBI:30616"/>
        <note>ligand shared between two neighboring subunits</note>
    </ligand>
</feature>
<feature type="binding site" evidence="1">
    <location>
        <position position="263"/>
    </location>
    <ligand>
        <name>L-methionine</name>
        <dbReference type="ChEBI" id="CHEBI:57844"/>
        <note>ligand shared between two neighboring subunits</note>
    </ligand>
</feature>
<feature type="binding site" description="in other chain" evidence="1">
    <location>
        <begin position="269"/>
        <end position="270"/>
    </location>
    <ligand>
        <name>ATP</name>
        <dbReference type="ChEBI" id="CHEBI:30616"/>
        <note>ligand shared between two neighboring subunits</note>
    </ligand>
</feature>
<feature type="binding site" evidence="1">
    <location>
        <position position="286"/>
    </location>
    <ligand>
        <name>ATP</name>
        <dbReference type="ChEBI" id="CHEBI:30616"/>
        <note>ligand shared between two neighboring subunits</note>
    </ligand>
</feature>
<feature type="binding site" evidence="1">
    <location>
        <position position="290"/>
    </location>
    <ligand>
        <name>ATP</name>
        <dbReference type="ChEBI" id="CHEBI:30616"/>
        <note>ligand shared between two neighboring subunits</note>
    </ligand>
</feature>
<feature type="binding site" description="in other chain" evidence="1">
    <location>
        <position position="294"/>
    </location>
    <ligand>
        <name>L-methionine</name>
        <dbReference type="ChEBI" id="CHEBI:57844"/>
        <note>ligand shared between two neighboring subunits</note>
    </ligand>
</feature>
<dbReference type="EC" id="2.5.1.6" evidence="1"/>
<dbReference type="EMBL" id="AP006841">
    <property type="protein sequence ID" value="BAD46810.1"/>
    <property type="molecule type" value="Genomic_DNA"/>
</dbReference>
<dbReference type="RefSeq" id="WP_005783643.1">
    <property type="nucleotide sequence ID" value="NC_006347.1"/>
</dbReference>
<dbReference type="RefSeq" id="YP_097344.1">
    <property type="nucleotide sequence ID" value="NC_006347.1"/>
</dbReference>
<dbReference type="SMR" id="Q650L4"/>
<dbReference type="STRING" id="295405.BF0061"/>
<dbReference type="GeneID" id="60366495"/>
<dbReference type="KEGG" id="bfr:BF0061"/>
<dbReference type="PATRIC" id="fig|295405.11.peg.98"/>
<dbReference type="HOGENOM" id="CLU_041802_1_1_10"/>
<dbReference type="OrthoDB" id="9801686at2"/>
<dbReference type="UniPathway" id="UPA00315">
    <property type="reaction ID" value="UER00080"/>
</dbReference>
<dbReference type="Proteomes" id="UP000002197">
    <property type="component" value="Chromosome"/>
</dbReference>
<dbReference type="GO" id="GO:0005737">
    <property type="term" value="C:cytoplasm"/>
    <property type="evidence" value="ECO:0007669"/>
    <property type="project" value="UniProtKB-SubCell"/>
</dbReference>
<dbReference type="GO" id="GO:0005524">
    <property type="term" value="F:ATP binding"/>
    <property type="evidence" value="ECO:0007669"/>
    <property type="project" value="UniProtKB-UniRule"/>
</dbReference>
<dbReference type="GO" id="GO:0000287">
    <property type="term" value="F:magnesium ion binding"/>
    <property type="evidence" value="ECO:0007669"/>
    <property type="project" value="UniProtKB-UniRule"/>
</dbReference>
<dbReference type="GO" id="GO:0004478">
    <property type="term" value="F:methionine adenosyltransferase activity"/>
    <property type="evidence" value="ECO:0007669"/>
    <property type="project" value="UniProtKB-UniRule"/>
</dbReference>
<dbReference type="GO" id="GO:0006730">
    <property type="term" value="P:one-carbon metabolic process"/>
    <property type="evidence" value="ECO:0007669"/>
    <property type="project" value="UniProtKB-KW"/>
</dbReference>
<dbReference type="GO" id="GO:0006556">
    <property type="term" value="P:S-adenosylmethionine biosynthetic process"/>
    <property type="evidence" value="ECO:0007669"/>
    <property type="project" value="UniProtKB-UniRule"/>
</dbReference>
<dbReference type="CDD" id="cd18079">
    <property type="entry name" value="S-AdoMet_synt"/>
    <property type="match status" value="1"/>
</dbReference>
<dbReference type="FunFam" id="3.30.300.10:FF:000020">
    <property type="entry name" value="S-adenosylmethionine synthase"/>
    <property type="match status" value="1"/>
</dbReference>
<dbReference type="Gene3D" id="3.30.300.10">
    <property type="match status" value="3"/>
</dbReference>
<dbReference type="HAMAP" id="MF_00086">
    <property type="entry name" value="S_AdoMet_synth1"/>
    <property type="match status" value="1"/>
</dbReference>
<dbReference type="InterPro" id="IPR022631">
    <property type="entry name" value="ADOMET_SYNTHASE_CS"/>
</dbReference>
<dbReference type="InterPro" id="IPR022630">
    <property type="entry name" value="S-AdoMet_synt_C"/>
</dbReference>
<dbReference type="InterPro" id="IPR022629">
    <property type="entry name" value="S-AdoMet_synt_central"/>
</dbReference>
<dbReference type="InterPro" id="IPR022628">
    <property type="entry name" value="S-AdoMet_synt_N"/>
</dbReference>
<dbReference type="InterPro" id="IPR002133">
    <property type="entry name" value="S-AdoMet_synthetase"/>
</dbReference>
<dbReference type="InterPro" id="IPR022636">
    <property type="entry name" value="S-AdoMet_synthetase_sfam"/>
</dbReference>
<dbReference type="NCBIfam" id="TIGR01034">
    <property type="entry name" value="metK"/>
    <property type="match status" value="1"/>
</dbReference>
<dbReference type="PANTHER" id="PTHR11964">
    <property type="entry name" value="S-ADENOSYLMETHIONINE SYNTHETASE"/>
    <property type="match status" value="1"/>
</dbReference>
<dbReference type="Pfam" id="PF02773">
    <property type="entry name" value="S-AdoMet_synt_C"/>
    <property type="match status" value="1"/>
</dbReference>
<dbReference type="Pfam" id="PF02772">
    <property type="entry name" value="S-AdoMet_synt_M"/>
    <property type="match status" value="1"/>
</dbReference>
<dbReference type="Pfam" id="PF00438">
    <property type="entry name" value="S-AdoMet_synt_N"/>
    <property type="match status" value="1"/>
</dbReference>
<dbReference type="PIRSF" id="PIRSF000497">
    <property type="entry name" value="MAT"/>
    <property type="match status" value="1"/>
</dbReference>
<dbReference type="SUPFAM" id="SSF55973">
    <property type="entry name" value="S-adenosylmethionine synthetase"/>
    <property type="match status" value="3"/>
</dbReference>
<dbReference type="PROSITE" id="PS00376">
    <property type="entry name" value="ADOMET_SYNTHASE_1"/>
    <property type="match status" value="1"/>
</dbReference>
<dbReference type="PROSITE" id="PS00377">
    <property type="entry name" value="ADOMET_SYNTHASE_2"/>
    <property type="match status" value="1"/>
</dbReference>
<gene>
    <name evidence="1" type="primary">metK</name>
    <name type="ordered locus">BF0061</name>
</gene>
<proteinExistence type="inferred from homology"/>
<accession>Q650L4</accession>